<accession>A8BAF1</accession>
<gene>
    <name evidence="9" type="ORF">GL50803_0017251</name>
    <name evidence="8" type="ORF">GL50803_17251</name>
</gene>
<organism evidence="8">
    <name type="scientific">Giardia intestinalis (strain ATCC 50803 / WB clone C6)</name>
    <name type="common">Giardia lamblia</name>
    <dbReference type="NCBI Taxonomy" id="184922"/>
    <lineage>
        <taxon>Eukaryota</taxon>
        <taxon>Metamonada</taxon>
        <taxon>Diplomonadida</taxon>
        <taxon>Hexamitidae</taxon>
        <taxon>Giardiinae</taxon>
        <taxon>Giardia</taxon>
    </lineage>
</organism>
<name>IF140_GIAIC</name>
<proteinExistence type="predicted"/>
<keyword id="KW-0966">Cell projection</keyword>
<keyword id="KW-0969">Cilium</keyword>
<keyword id="KW-0970">Cilium biogenesis/degradation</keyword>
<keyword id="KW-0963">Cytoplasm</keyword>
<keyword id="KW-0206">Cytoskeleton</keyword>
<keyword id="KW-0282">Flagellum</keyword>
<keyword id="KW-0433">Leucine-rich repeat</keyword>
<keyword id="KW-1185">Reference proteome</keyword>
<keyword id="KW-0677">Repeat</keyword>
<keyword id="KW-0853">WD repeat</keyword>
<feature type="chain" id="PRO_0000459249" description="Intraflagellar transport protein 140">
    <location>
        <begin position="1"/>
        <end position="1929"/>
    </location>
</feature>
<feature type="repeat" description="WD 1" evidence="1">
    <location>
        <begin position="76"/>
        <end position="116"/>
    </location>
</feature>
<feature type="repeat" description="WD 2" evidence="1">
    <location>
        <begin position="119"/>
        <end position="158"/>
    </location>
</feature>
<feature type="repeat" description="LRR 1" evidence="1">
    <location>
        <begin position="957"/>
        <end position="980"/>
    </location>
</feature>
<feature type="repeat" description="LRR 2" evidence="1">
    <location>
        <begin position="1019"/>
        <end position="1044"/>
    </location>
</feature>
<feature type="repeat" description="LRR 3" evidence="1">
    <location>
        <begin position="1510"/>
        <end position="1532"/>
    </location>
</feature>
<feature type="region of interest" description="Disordered" evidence="2">
    <location>
        <begin position="774"/>
        <end position="795"/>
    </location>
</feature>
<protein>
    <recommendedName>
        <fullName evidence="6">Intraflagellar transport protein 140</fullName>
        <shortName evidence="6">IFT140</shortName>
    </recommendedName>
    <alternativeName>
        <fullName evidence="8">IFT complex A</fullName>
    </alternativeName>
    <alternativeName>
        <fullName evidence="5">Intraflagellar transport complex A subunit 140</fullName>
    </alternativeName>
    <alternativeName>
        <fullName evidence="5 9">Intraflagellar transport protein IFT140</fullName>
    </alternativeName>
</protein>
<reference evidence="8 10" key="1">
    <citation type="journal article" date="2007" name="Science">
        <title>Genomic minimalism in the early diverging intestinal parasite Giardia lamblia.</title>
        <authorList>
            <person name="Morrison H.G."/>
            <person name="McArthur A.G."/>
            <person name="Gillin F.D."/>
            <person name="Aley S.B."/>
            <person name="Adam R.D."/>
            <person name="Olsen G.J."/>
            <person name="Best A.A."/>
            <person name="Cande W.Z."/>
            <person name="Chen F."/>
            <person name="Cipriano M.J."/>
            <person name="Davids B.J."/>
            <person name="Dawson S.C."/>
            <person name="Elmendorf H.G."/>
            <person name="Hehl A.B."/>
            <person name="Holder M.E."/>
            <person name="Huse S.M."/>
            <person name="Kim U.U."/>
            <person name="Lasek-Nesselquist E."/>
            <person name="Manning G."/>
            <person name="Nigam A."/>
            <person name="Nixon J.E.J."/>
            <person name="Palm D."/>
            <person name="Passamaneck N.E."/>
            <person name="Prabhu A."/>
            <person name="Reich C.I."/>
            <person name="Reiner D.S."/>
            <person name="Samuelson J."/>
            <person name="Svard S.G."/>
            <person name="Sogin M.L."/>
        </authorList>
    </citation>
    <scope>NUCLEOTIDE SEQUENCE [LARGE SCALE GENOMIC DNA]</scope>
    <source>
        <strain evidence="10">ATCC 50803 / WB clone C6</strain>
    </source>
</reference>
<reference evidence="9" key="2">
    <citation type="submission" date="2019-07" db="EMBL/GenBank/DDBJ databases">
        <title>New Giardia intestinalis WB genome in near-complete chromosomes.</title>
        <authorList>
            <person name="Xu F."/>
            <person name="Jex A."/>
            <person name="Svard S.G."/>
        </authorList>
    </citation>
    <scope>NUCLEOTIDE SEQUENCE [LARGE SCALE GENOMIC DNA]</scope>
    <source>
        <strain evidence="9">ATCC 50803 / WB clone C6</strain>
    </source>
</reference>
<reference key="3">
    <citation type="journal article" date="2008" name="Mol. Biol. Cell">
        <title>High-resolution crystal structure and in vivo function of a kinesin-2 homologue in Giardia intestinalis.</title>
        <authorList>
            <person name="Hoeng J.C."/>
            <person name="Dawson S.C."/>
            <person name="House S.A."/>
            <person name="Sagolla M.S."/>
            <person name="Pham J.K."/>
            <person name="Mancuso J.J."/>
            <person name="Lowe J."/>
            <person name="Cande W.Z."/>
        </authorList>
    </citation>
    <scope>SUBCELLULAR LOCATION</scope>
    <source>
        <strain evidence="5">ATCC 50803 / WB clone C6</strain>
    </source>
</reference>
<reference key="4">
    <citation type="journal article" date="2019" name="Elife">
        <title>Length-dependent disassembly maintains four different flagellar lengths in Giardia.</title>
        <authorList>
            <person name="McInally S.G."/>
            <person name="Kondev J."/>
            <person name="Dawson S.C."/>
        </authorList>
    </citation>
    <scope>FUNCTION</scope>
    <scope>SUBCELLULAR LOCATION</scope>
    <source>
        <strain evidence="6">ATCC 50803 / WB clone C6</strain>
    </source>
</reference>
<comment type="function">
    <text evidence="7">Component of the intraflagellar transport complex A (IFT-A) involved in flagellar assembly (PubMed:31855176).</text>
</comment>
<comment type="subcellular location">
    <subcellularLocation>
        <location evidence="3 4">Cell projection</location>
        <location evidence="3 4">Cilium</location>
        <location evidence="3 4">Flagellum</location>
    </subcellularLocation>
    <subcellularLocation>
        <location evidence="3 4">Cytoplasm</location>
        <location evidence="3 4">Cytoskeleton</location>
        <location evidence="3 4">Flagellum axoneme</location>
    </subcellularLocation>
    <subcellularLocation>
        <location evidence="4">Cytoplasm</location>
        <location evidence="4">Cytoskeleton</location>
        <location evidence="4">Flagellum basal body</location>
    </subcellularLocation>
    <text evidence="3 4">Localizes to the cytoplasmic and membrane-bound portions of each of the eight axonemes, localizing particularly at the flagellar pores and at the distal flagellar tips (PubMed:18463165, PubMed:31855176). Localizes to the basal bodies (PubMed:31855176). Main cytoplasmic localization in the posteriolateral axonemes (PubMed:18463165).</text>
</comment>
<evidence type="ECO:0000255" key="1"/>
<evidence type="ECO:0000256" key="2">
    <source>
        <dbReference type="SAM" id="MobiDB-lite"/>
    </source>
</evidence>
<evidence type="ECO:0000269" key="3">
    <source>
    </source>
</evidence>
<evidence type="ECO:0000269" key="4">
    <source>
    </source>
</evidence>
<evidence type="ECO:0000303" key="5">
    <source>
    </source>
</evidence>
<evidence type="ECO:0000303" key="6">
    <source>
    </source>
</evidence>
<evidence type="ECO:0000305" key="7">
    <source>
    </source>
</evidence>
<evidence type="ECO:0000312" key="8">
    <source>
        <dbReference type="EMBL" id="EDO80709.1"/>
    </source>
</evidence>
<evidence type="ECO:0000312" key="9">
    <source>
        <dbReference type="EMBL" id="KAE8303512.1"/>
    </source>
</evidence>
<evidence type="ECO:0000312" key="10">
    <source>
        <dbReference type="Proteomes" id="UP000001548"/>
    </source>
</evidence>
<sequence length="1929" mass="212379">MIQITIDVILEDPTLCVVQLYTQVSSQTVFALLSDGSLAVLYPNDNNALVLASKTSMANQLPVDILRKVITTDEGQVQVPITALACHPFVENLVVVGFKDASFSIWFPTDSDPSYKTELHQEELCLIKWLSHGRILVTCDVSGQVILYKFSTDTYSFESITKTRKSGHVVDIVERTCCTDNIIYSIDQEHSDHPIDVSNYAGVGLCEFIVMWSKGDVAVLTDNGVIRHIGTVNLSAGHALLYKLYYWSCSDTCCAISTSGDMFLFGFKTLAVGAYKDILAKYKIEYKRENGIVQLPATKIAYMAPSDGQLRVLSLLTQEVAYIDLEDHIENFVGVNGGLAVIRDYGILIPLRGKNGYAVVSCHRSTGSCDSNGNEGMHILAASDHYLHANDMRFARVQDSNGPSSGPRIRPGSDEFIVTEQHFLHAENPRCSYANIYMSQIVVGDNSFSQTMITNYSITNRNVVSNKMLPIFHDEGGKPINLPPGFSPETASTPEGVDDATIDSFSAEIISSRGKFVSLLLFSFEPKDMQVAYANNTNSAIMAQDLTGEGLTHMKFLDQKFTDSRNSFISAVLIGARIIKVSVNTNANLLQEHTLEIKHPIKKISILTNPLTSVSSDNLSGFVLAFGDNVFTVFEVAIGKVPHLAGSFKLDERYTYVADCVLYGRYILASQNSRADLESDYLKVEIVKYSITGSKAGSLVLSDDPTHGATVERIARMTLVNQHLFMINNNLSLFYTDCKTFNSVVKITDIGQLMFNTNIYCAYLEEEDLDDIHLSTPDTGSPAVEAEESPQRQTREEKIKDLLLVENTMQINQQLHDRIKQERKEQNVISVYTTLPTLIPLDTICVQSCNATITLDNAHHVLFTVVFKGYNVVTGLPCLLPYVVALSIDTKILGEMISAGLTATPSQPTEKVGSRPTTGSDGGSAVLKSRIFDMAPYTVTNAIPDCFGNIGLELVLSTSLNLLFVGSSMLFALKTGTFTKRALSSKNLSAYLSWLDSKEKGSQRNADLVFQQEKYEDQISLLQSIYISSEQRAKVPLLVQSLAETTISMNDRIKGSWLDFNDKIFLSIQGVFAPYVNSKLETLMQPLSSTMLTLLSPAFVFSERSGKSEKPRTSNFVSINSDRLTIKNLTALGSSKKTGFQQSCTATYALNKFTICSSNGQLAEAYSHVLVSENLHVWRSLATLCIQNGYVDLLKTCTTHLKSPILSLLMRLVTNRKRSDAADTGQDQLKTKLAPQDELLLALLSIALGASAQGLDRLQGKPLLLSGVMNDIGLSIRYLMSDGAHSSLQQTGGLTSLAKKSSILSLANRLIHLNDLESSKICYSEVYKAPVAAQGEIDSLNANPQQLLQQNESVQFLNDEYKKKGVAACLTLAKKGTDPQFLYVAARMIESEAKSRDVKSDIPGKMKDELDQQTLWLEAARLYKRCSAFTHALACALKCEDDELIYNIGTTSQSQRLSLVAATYFSNKYKSGLITISEKGRDNVSEDFCDELQATIEHALVLYKSAGLGAQSLELCIKSNRMKELSNLLADILSEPSKSLDRELDDDVVLQEQSTTTQGTGDVLQGISSDLLLRAGRALLDVSPEDYSLNDYNSFIRTAVIALAKASAYQDALQAILDGKIQISERIADILTPASIEHDEEAVRVTETLGKLLHKAGLYQSAVKKFILAQNHTLAINSLIKQGDPMKVIKFANMARQKQVYIAASNFLQTLDWRSNPTYMKAIISFYEKANSLENIAKFFANCAAEEISEYHDYVKAKQAIIEAMNRQKVAIDYVEQNASSKESEKVATARAAKVASLKKTLQAYEQNGKLIHAFLQLCDFARDTSQAHDSSETLTTNSSKLLTAVRKMENCYVKPGDIMGLLAEFHGVRGEKARIVSIIKDMCNEGIDPENYLAADLYAAHAAEAGLTVVNKALELEDIDLTAEKSDH</sequence>
<dbReference type="EMBL" id="AACB02000008">
    <property type="protein sequence ID" value="EDO80709.1"/>
    <property type="molecule type" value="Genomic_DNA"/>
</dbReference>
<dbReference type="EMBL" id="AACB03000002">
    <property type="protein sequence ID" value="KAE8303512.1"/>
    <property type="molecule type" value="Genomic_DNA"/>
</dbReference>
<dbReference type="RefSeq" id="XP_001708383.1">
    <property type="nucleotide sequence ID" value="XM_001708331.1"/>
</dbReference>
<dbReference type="STRING" id="184922.A8BAF1"/>
<dbReference type="EnsemblProtists" id="EDO80709">
    <property type="protein sequence ID" value="EDO80709"/>
    <property type="gene ID" value="GL50803_17251"/>
</dbReference>
<dbReference type="GeneID" id="5701294"/>
<dbReference type="KEGG" id="gla:GL50803_0017251"/>
<dbReference type="VEuPathDB" id="GiardiaDB:GL50803_17251"/>
<dbReference type="HOGENOM" id="CLU_235239_0_0_1"/>
<dbReference type="OMA" id="YLHANDM"/>
<dbReference type="Proteomes" id="UP000001548">
    <property type="component" value="Chromosome 4"/>
</dbReference>
<dbReference type="GO" id="GO:0097729">
    <property type="term" value="C:9+2 motile cilium"/>
    <property type="evidence" value="ECO:0000314"/>
    <property type="project" value="UniProtKB"/>
</dbReference>
<dbReference type="GO" id="GO:0005930">
    <property type="term" value="C:axoneme"/>
    <property type="evidence" value="ECO:0000314"/>
    <property type="project" value="UniProtKB"/>
</dbReference>
<dbReference type="GO" id="GO:0036064">
    <property type="term" value="C:ciliary basal body"/>
    <property type="evidence" value="ECO:0000314"/>
    <property type="project" value="UniProtKB"/>
</dbReference>
<dbReference type="GO" id="GO:1990900">
    <property type="term" value="C:ciliary pocket collar"/>
    <property type="evidence" value="ECO:0000314"/>
    <property type="project" value="UniProtKB"/>
</dbReference>
<dbReference type="GO" id="GO:0097542">
    <property type="term" value="C:ciliary tip"/>
    <property type="evidence" value="ECO:0000314"/>
    <property type="project" value="UniProtKB"/>
</dbReference>
<dbReference type="GO" id="GO:0030991">
    <property type="term" value="C:intraciliary transport particle A"/>
    <property type="evidence" value="ECO:0000318"/>
    <property type="project" value="GO_Central"/>
</dbReference>
<dbReference type="GO" id="GO:0035720">
    <property type="term" value="P:intraciliary anterograde transport"/>
    <property type="evidence" value="ECO:0000305"/>
    <property type="project" value="UniProtKB"/>
</dbReference>
<dbReference type="GO" id="GO:0035721">
    <property type="term" value="P:intraciliary retrograde transport"/>
    <property type="evidence" value="ECO:0000318"/>
    <property type="project" value="GO_Central"/>
</dbReference>
<dbReference type="GO" id="GO:0035735">
    <property type="term" value="P:intraciliary transport involved in cilium assembly"/>
    <property type="evidence" value="ECO:0000305"/>
    <property type="project" value="UniProtKB"/>
</dbReference>
<dbReference type="FunFam" id="2.130.10.10:FF:002273">
    <property type="entry name" value="IFT complex A"/>
    <property type="match status" value="1"/>
</dbReference>
<dbReference type="Gene3D" id="2.130.10.10">
    <property type="entry name" value="YVTN repeat-like/Quinoprotein amine dehydrogenase"/>
    <property type="match status" value="1"/>
</dbReference>
<dbReference type="InterPro" id="IPR056168">
    <property type="entry name" value="TPR_IF140/IFT172/WDR19"/>
</dbReference>
<dbReference type="InterPro" id="IPR056156">
    <property type="entry name" value="TPR_IF140_C"/>
</dbReference>
<dbReference type="InterPro" id="IPR015943">
    <property type="entry name" value="WD40/YVTN_repeat-like_dom_sf"/>
</dbReference>
<dbReference type="InterPro" id="IPR036322">
    <property type="entry name" value="WD40_repeat_dom_sf"/>
</dbReference>
<dbReference type="PANTHER" id="PTHR15722">
    <property type="entry name" value="IFT140/172-RELATED"/>
    <property type="match status" value="1"/>
</dbReference>
<dbReference type="PANTHER" id="PTHR15722:SF7">
    <property type="entry name" value="INTRAFLAGELLAR TRANSPORT PROTEIN 140 HOMOLOG"/>
    <property type="match status" value="1"/>
</dbReference>
<dbReference type="Pfam" id="PF24762">
    <property type="entry name" value="TPR_IF140-IFT172"/>
    <property type="match status" value="1"/>
</dbReference>
<dbReference type="Pfam" id="PF24760">
    <property type="entry name" value="TPR_IF140_C"/>
    <property type="match status" value="1"/>
</dbReference>
<dbReference type="SUPFAM" id="SSF50978">
    <property type="entry name" value="WD40 repeat-like"/>
    <property type="match status" value="1"/>
</dbReference>